<sequence>MTPNILPIESYDHQLAEKSARLKAMMLPFQAPEPEIFRSPADHYRMRAEFRVWHDEDDLYHIMFDQQTKQRIRVEQFPVASRLINRLMDALMTAIRAEPLLRRKLFQIDYLSTLSGKLIASLLYHRQLDEEWQQKALELRDQLRAQGFDLQLIGRAAKTKIMLDHDYIDEVLPVAGREMIYRQVENSFTQPNAAVNIHMLEWALDVTQGATGDLLELYCGNGNFSLALARNFERVLATEIAKPSVAAAQYNIAANNIDNVQIIRMSAEEFTQAMQGVREFNRLKGIDLGSYNCETIFVDPPRSGLDHETVKLVQAYPRILYISCNPETLCANLEQLQHTHKISRLALFDQFPYTHHMECGVLLEKRH</sequence>
<comment type="function">
    <text evidence="1">Dual-specificity methyltransferase that catalyzes the formation of 5-methyluridine at position 54 (m5U54) in all tRNAs, and that of position 341 (m5U341) in tmRNA (transfer-mRNA).</text>
</comment>
<comment type="catalytic activity">
    <reaction evidence="1">
        <text>uridine(54) in tRNA + S-adenosyl-L-methionine = 5-methyluridine(54) in tRNA + S-adenosyl-L-homocysteine + H(+)</text>
        <dbReference type="Rhea" id="RHEA:42712"/>
        <dbReference type="Rhea" id="RHEA-COMP:10167"/>
        <dbReference type="Rhea" id="RHEA-COMP:10193"/>
        <dbReference type="ChEBI" id="CHEBI:15378"/>
        <dbReference type="ChEBI" id="CHEBI:57856"/>
        <dbReference type="ChEBI" id="CHEBI:59789"/>
        <dbReference type="ChEBI" id="CHEBI:65315"/>
        <dbReference type="ChEBI" id="CHEBI:74447"/>
        <dbReference type="EC" id="2.1.1.35"/>
    </reaction>
</comment>
<comment type="catalytic activity">
    <reaction evidence="1">
        <text>uridine(341) in tmRNA + S-adenosyl-L-methionine = 5-methyluridine(341) in tmRNA + S-adenosyl-L-homocysteine + H(+)</text>
        <dbReference type="Rhea" id="RHEA:43612"/>
        <dbReference type="Rhea" id="RHEA-COMP:10630"/>
        <dbReference type="Rhea" id="RHEA-COMP:10631"/>
        <dbReference type="ChEBI" id="CHEBI:15378"/>
        <dbReference type="ChEBI" id="CHEBI:57856"/>
        <dbReference type="ChEBI" id="CHEBI:59789"/>
        <dbReference type="ChEBI" id="CHEBI:65315"/>
        <dbReference type="ChEBI" id="CHEBI:74447"/>
    </reaction>
</comment>
<comment type="similarity">
    <text evidence="1">Belongs to the class I-like SAM-binding methyltransferase superfamily. RNA M5U methyltransferase family. TrmA subfamily.</text>
</comment>
<gene>
    <name evidence="1" type="primary">trmA</name>
    <name type="ordered locus">YPTS_0131</name>
</gene>
<evidence type="ECO:0000255" key="1">
    <source>
        <dbReference type="HAMAP-Rule" id="MF_01011"/>
    </source>
</evidence>
<keyword id="KW-0489">Methyltransferase</keyword>
<keyword id="KW-0949">S-adenosyl-L-methionine</keyword>
<keyword id="KW-0808">Transferase</keyword>
<keyword id="KW-0819">tRNA processing</keyword>
<dbReference type="EC" id="2.1.1.-" evidence="1"/>
<dbReference type="EC" id="2.1.1.35" evidence="1"/>
<dbReference type="EMBL" id="CP001048">
    <property type="protein sequence ID" value="ACC87130.1"/>
    <property type="molecule type" value="Genomic_DNA"/>
</dbReference>
<dbReference type="RefSeq" id="WP_002209474.1">
    <property type="nucleotide sequence ID" value="NZ_CP009780.1"/>
</dbReference>
<dbReference type="SMR" id="B2JZF7"/>
<dbReference type="GeneID" id="57974789"/>
<dbReference type="KEGG" id="ypb:YPTS_0131"/>
<dbReference type="PATRIC" id="fig|502801.10.peg.3808"/>
<dbReference type="GO" id="GO:0005829">
    <property type="term" value="C:cytosol"/>
    <property type="evidence" value="ECO:0007669"/>
    <property type="project" value="TreeGrafter"/>
</dbReference>
<dbReference type="GO" id="GO:0019843">
    <property type="term" value="F:rRNA binding"/>
    <property type="evidence" value="ECO:0007669"/>
    <property type="project" value="TreeGrafter"/>
</dbReference>
<dbReference type="GO" id="GO:0030697">
    <property type="term" value="F:tRNA (uracil(54)-C5)-methyltransferase activity, S-adenosyl methionine-dependent"/>
    <property type="evidence" value="ECO:0007669"/>
    <property type="project" value="UniProtKB-UniRule"/>
</dbReference>
<dbReference type="GO" id="GO:0000049">
    <property type="term" value="F:tRNA binding"/>
    <property type="evidence" value="ECO:0007669"/>
    <property type="project" value="TreeGrafter"/>
</dbReference>
<dbReference type="GO" id="GO:0030488">
    <property type="term" value="P:tRNA methylation"/>
    <property type="evidence" value="ECO:0007669"/>
    <property type="project" value="UniProtKB-UniRule"/>
</dbReference>
<dbReference type="CDD" id="cd02440">
    <property type="entry name" value="AdoMet_MTases"/>
    <property type="match status" value="1"/>
</dbReference>
<dbReference type="FunFam" id="2.40.50.1070:FF:000001">
    <property type="entry name" value="tRNA/tmRNA (uracil-C(5))-methyltransferase"/>
    <property type="match status" value="1"/>
</dbReference>
<dbReference type="FunFam" id="3.40.50.150:FF:000012">
    <property type="entry name" value="tRNA/tmRNA (uracil-C(5))-methyltransferase"/>
    <property type="match status" value="1"/>
</dbReference>
<dbReference type="Gene3D" id="2.40.50.1070">
    <property type="match status" value="1"/>
</dbReference>
<dbReference type="Gene3D" id="3.40.50.150">
    <property type="entry name" value="Vaccinia Virus protein VP39"/>
    <property type="match status" value="1"/>
</dbReference>
<dbReference type="HAMAP" id="MF_01011">
    <property type="entry name" value="RNA_methyltr_TrmA"/>
    <property type="match status" value="1"/>
</dbReference>
<dbReference type="InterPro" id="IPR030390">
    <property type="entry name" value="MeTrfase_TrmA_AS"/>
</dbReference>
<dbReference type="InterPro" id="IPR030391">
    <property type="entry name" value="MeTrfase_TrmA_CS"/>
</dbReference>
<dbReference type="InterPro" id="IPR029063">
    <property type="entry name" value="SAM-dependent_MTases_sf"/>
</dbReference>
<dbReference type="InterPro" id="IPR011869">
    <property type="entry name" value="TrmA_MeTrfase"/>
</dbReference>
<dbReference type="InterPro" id="IPR010280">
    <property type="entry name" value="U5_MeTrfase_fam"/>
</dbReference>
<dbReference type="NCBIfam" id="TIGR02143">
    <property type="entry name" value="trmA_only"/>
    <property type="match status" value="1"/>
</dbReference>
<dbReference type="PANTHER" id="PTHR47790">
    <property type="entry name" value="TRNA/TMRNA (URACIL-C(5))-METHYLTRANSFERASE"/>
    <property type="match status" value="1"/>
</dbReference>
<dbReference type="PANTHER" id="PTHR47790:SF2">
    <property type="entry name" value="TRNA_TMRNA (URACIL-C(5))-METHYLTRANSFERASE"/>
    <property type="match status" value="1"/>
</dbReference>
<dbReference type="Pfam" id="PF05958">
    <property type="entry name" value="tRNA_U5-meth_tr"/>
    <property type="match status" value="1"/>
</dbReference>
<dbReference type="SUPFAM" id="SSF53335">
    <property type="entry name" value="S-adenosyl-L-methionine-dependent methyltransferases"/>
    <property type="match status" value="1"/>
</dbReference>
<dbReference type="PROSITE" id="PS51687">
    <property type="entry name" value="SAM_MT_RNA_M5U"/>
    <property type="match status" value="1"/>
</dbReference>
<dbReference type="PROSITE" id="PS01230">
    <property type="entry name" value="TRMA_1"/>
    <property type="match status" value="1"/>
</dbReference>
<dbReference type="PROSITE" id="PS01231">
    <property type="entry name" value="TRMA_2"/>
    <property type="match status" value="1"/>
</dbReference>
<organism>
    <name type="scientific">Yersinia pseudotuberculosis serotype IB (strain PB1/+)</name>
    <dbReference type="NCBI Taxonomy" id="502801"/>
    <lineage>
        <taxon>Bacteria</taxon>
        <taxon>Pseudomonadati</taxon>
        <taxon>Pseudomonadota</taxon>
        <taxon>Gammaproteobacteria</taxon>
        <taxon>Enterobacterales</taxon>
        <taxon>Yersiniaceae</taxon>
        <taxon>Yersinia</taxon>
    </lineage>
</organism>
<proteinExistence type="inferred from homology"/>
<feature type="chain" id="PRO_1000198562" description="tRNA/tmRNA (uracil-C(5))-methyltransferase">
    <location>
        <begin position="1"/>
        <end position="367"/>
    </location>
</feature>
<feature type="active site" description="Nucleophile" evidence="1">
    <location>
        <position position="324"/>
    </location>
</feature>
<feature type="active site" description="Proton acceptor" evidence="1">
    <location>
        <position position="358"/>
    </location>
</feature>
<feature type="binding site" evidence="1">
    <location>
        <position position="190"/>
    </location>
    <ligand>
        <name>S-adenosyl-L-methionine</name>
        <dbReference type="ChEBI" id="CHEBI:59789"/>
    </ligand>
</feature>
<feature type="binding site" evidence="1">
    <location>
        <position position="218"/>
    </location>
    <ligand>
        <name>S-adenosyl-L-methionine</name>
        <dbReference type="ChEBI" id="CHEBI:59789"/>
    </ligand>
</feature>
<feature type="binding site" evidence="1">
    <location>
        <position position="223"/>
    </location>
    <ligand>
        <name>S-adenosyl-L-methionine</name>
        <dbReference type="ChEBI" id="CHEBI:59789"/>
    </ligand>
</feature>
<feature type="binding site" evidence="1">
    <location>
        <position position="239"/>
    </location>
    <ligand>
        <name>S-adenosyl-L-methionine</name>
        <dbReference type="ChEBI" id="CHEBI:59789"/>
    </ligand>
</feature>
<feature type="binding site" evidence="1">
    <location>
        <position position="299"/>
    </location>
    <ligand>
        <name>S-adenosyl-L-methionine</name>
        <dbReference type="ChEBI" id="CHEBI:59789"/>
    </ligand>
</feature>
<name>TRMA_YERPB</name>
<reference key="1">
    <citation type="submission" date="2008-04" db="EMBL/GenBank/DDBJ databases">
        <title>Complete sequence of Yersinia pseudotuberculosis PB1/+.</title>
        <authorList>
            <person name="Copeland A."/>
            <person name="Lucas S."/>
            <person name="Lapidus A."/>
            <person name="Glavina del Rio T."/>
            <person name="Dalin E."/>
            <person name="Tice H."/>
            <person name="Bruce D."/>
            <person name="Goodwin L."/>
            <person name="Pitluck S."/>
            <person name="Munk A.C."/>
            <person name="Brettin T."/>
            <person name="Detter J.C."/>
            <person name="Han C."/>
            <person name="Tapia R."/>
            <person name="Schmutz J."/>
            <person name="Larimer F."/>
            <person name="Land M."/>
            <person name="Hauser L."/>
            <person name="Challacombe J.F."/>
            <person name="Green L."/>
            <person name="Lindler L.E."/>
            <person name="Nikolich M.P."/>
            <person name="Richardson P."/>
        </authorList>
    </citation>
    <scope>NUCLEOTIDE SEQUENCE [LARGE SCALE GENOMIC DNA]</scope>
    <source>
        <strain>PB1/+</strain>
    </source>
</reference>
<protein>
    <recommendedName>
        <fullName evidence="1">tRNA/tmRNA (uracil-C(5))-methyltransferase</fullName>
        <ecNumber evidence="1">2.1.1.-</ecNumber>
        <ecNumber evidence="1">2.1.1.35</ecNumber>
    </recommendedName>
    <alternativeName>
        <fullName evidence="1">tRNA (uracil(54)-C(5))-methyltransferase</fullName>
    </alternativeName>
    <alternativeName>
        <fullName evidence="1">tRNA(m5U54)-methyltransferase</fullName>
        <shortName evidence="1">RUMT</shortName>
    </alternativeName>
    <alternativeName>
        <fullName evidence="1">tmRNA (uracil(341)-C(5))-methyltransferase</fullName>
    </alternativeName>
</protein>
<accession>B2JZF7</accession>